<protein>
    <recommendedName>
        <fullName evidence="1">Glucose-6-phosphate isomerase</fullName>
        <shortName evidence="1">GPI</shortName>
        <ecNumber evidence="1">5.3.1.9</ecNumber>
    </recommendedName>
    <alternativeName>
        <fullName evidence="1">Phosphoglucose isomerase</fullName>
        <shortName evidence="1">PGI</shortName>
    </alternativeName>
    <alternativeName>
        <fullName evidence="1">Phosphohexose isomerase</fullName>
        <shortName evidence="1">PHI</shortName>
    </alternativeName>
</protein>
<comment type="function">
    <text evidence="1">Catalyzes the reversible isomerization of glucose-6-phosphate to fructose-6-phosphate.</text>
</comment>
<comment type="catalytic activity">
    <reaction evidence="1">
        <text>alpha-D-glucose 6-phosphate = beta-D-fructose 6-phosphate</text>
        <dbReference type="Rhea" id="RHEA:11816"/>
        <dbReference type="ChEBI" id="CHEBI:57634"/>
        <dbReference type="ChEBI" id="CHEBI:58225"/>
        <dbReference type="EC" id="5.3.1.9"/>
    </reaction>
</comment>
<comment type="pathway">
    <text evidence="1">Carbohydrate biosynthesis; gluconeogenesis.</text>
</comment>
<comment type="pathway">
    <text evidence="1">Carbohydrate degradation; glycolysis; D-glyceraldehyde 3-phosphate and glycerone phosphate from D-glucose: step 2/4.</text>
</comment>
<comment type="subcellular location">
    <subcellularLocation>
        <location evidence="1">Cytoplasm</location>
    </subcellularLocation>
</comment>
<comment type="similarity">
    <text evidence="1">Belongs to the GPI family.</text>
</comment>
<accession>Q0SMC6</accession>
<accession>G0IRI1</accession>
<proteinExistence type="inferred from homology"/>
<sequence>MINYKNLNELENFKILERIDPEVLKTVLTGKRIKEYDITIEGDSVHYNYASKQINENHLKIFQNLSDEANLIEKYKEILNGERVNISENRKVLHHLTRGQIGKDVIEDNKENMREFFQSELEKIYNFAKQIHSGNIKSANGKKFKNVVQIGIGGSSLGPKALYSSIKNYAKKHNLALMNGYFISNIDPDESAEVLNSINIDETLFIIVSKSGNTLETKANMQFLINKLKSNGIKEYKKQMVIITLKNSMLALEEKGYLEYFFMHDSIGGRFSPTSAVGLVLLALCFTEKIVKEILKGANKADKKSLNKNVKDNAPLLAALISIYERNVLNYSSNCIIAYSKAMENFYLHLQQLEMESNGKSVNRFNETINYKTVRIIWGGIGTDVQHSFFQMLHQGTDIVPMDFIGFNETQLKEDVISDNSSSNDKLKANLIAQIIAFSKGKENSNKNKNFKGERPSALIYSKELTPYAIGSILSHYENKVMFEGFLLNINSFDQEGVQLGKTLANQILKNDTFEDEAIESYSKKILKQD</sequence>
<keyword id="KW-0963">Cytoplasm</keyword>
<keyword id="KW-0312">Gluconeogenesis</keyword>
<keyword id="KW-0324">Glycolysis</keyword>
<keyword id="KW-0413">Isomerase</keyword>
<gene>
    <name evidence="1" type="primary">pgi</name>
    <name type="ordered locus">BAPKO_0774</name>
    <name type="ordered locus">BafPKo_0754</name>
</gene>
<dbReference type="EC" id="5.3.1.9" evidence="1"/>
<dbReference type="EMBL" id="CP000395">
    <property type="protein sequence ID" value="ABH02002.1"/>
    <property type="molecule type" value="Genomic_DNA"/>
</dbReference>
<dbReference type="EMBL" id="CP002933">
    <property type="protein sequence ID" value="AEL69947.1"/>
    <property type="molecule type" value="Genomic_DNA"/>
</dbReference>
<dbReference type="RefSeq" id="WP_011601191.1">
    <property type="nucleotide sequence ID" value="NZ_CP160066.1"/>
</dbReference>
<dbReference type="SMR" id="Q0SMC6"/>
<dbReference type="STRING" id="29518.BLA32_00580"/>
<dbReference type="KEGG" id="baf:BAPKO_0774"/>
<dbReference type="KEGG" id="bafz:BafPKo_0754"/>
<dbReference type="PATRIC" id="fig|390236.22.peg.720"/>
<dbReference type="eggNOG" id="COG0166">
    <property type="taxonomic scope" value="Bacteria"/>
</dbReference>
<dbReference type="HOGENOM" id="CLU_017947_3_1_12"/>
<dbReference type="OrthoDB" id="140919at2"/>
<dbReference type="UniPathway" id="UPA00109">
    <property type="reaction ID" value="UER00181"/>
</dbReference>
<dbReference type="UniPathway" id="UPA00138"/>
<dbReference type="Proteomes" id="UP000005216">
    <property type="component" value="Chromosome"/>
</dbReference>
<dbReference type="GO" id="GO:0005829">
    <property type="term" value="C:cytosol"/>
    <property type="evidence" value="ECO:0007669"/>
    <property type="project" value="TreeGrafter"/>
</dbReference>
<dbReference type="GO" id="GO:0097367">
    <property type="term" value="F:carbohydrate derivative binding"/>
    <property type="evidence" value="ECO:0007669"/>
    <property type="project" value="InterPro"/>
</dbReference>
<dbReference type="GO" id="GO:0004347">
    <property type="term" value="F:glucose-6-phosphate isomerase activity"/>
    <property type="evidence" value="ECO:0007669"/>
    <property type="project" value="UniProtKB-UniRule"/>
</dbReference>
<dbReference type="GO" id="GO:0048029">
    <property type="term" value="F:monosaccharide binding"/>
    <property type="evidence" value="ECO:0007669"/>
    <property type="project" value="TreeGrafter"/>
</dbReference>
<dbReference type="GO" id="GO:0006094">
    <property type="term" value="P:gluconeogenesis"/>
    <property type="evidence" value="ECO:0007669"/>
    <property type="project" value="UniProtKB-UniRule"/>
</dbReference>
<dbReference type="GO" id="GO:0051156">
    <property type="term" value="P:glucose 6-phosphate metabolic process"/>
    <property type="evidence" value="ECO:0007669"/>
    <property type="project" value="TreeGrafter"/>
</dbReference>
<dbReference type="GO" id="GO:0006096">
    <property type="term" value="P:glycolytic process"/>
    <property type="evidence" value="ECO:0007669"/>
    <property type="project" value="UniProtKB-UniRule"/>
</dbReference>
<dbReference type="CDD" id="cd05015">
    <property type="entry name" value="SIS_PGI_1"/>
    <property type="match status" value="1"/>
</dbReference>
<dbReference type="CDD" id="cd05016">
    <property type="entry name" value="SIS_PGI_2"/>
    <property type="match status" value="1"/>
</dbReference>
<dbReference type="Gene3D" id="1.10.1390.10">
    <property type="match status" value="1"/>
</dbReference>
<dbReference type="Gene3D" id="3.40.50.10490">
    <property type="entry name" value="Glucose-6-phosphate isomerase like protein, domain 1"/>
    <property type="match status" value="2"/>
</dbReference>
<dbReference type="HAMAP" id="MF_00473">
    <property type="entry name" value="G6P_isomerase"/>
    <property type="match status" value="1"/>
</dbReference>
<dbReference type="InterPro" id="IPR001672">
    <property type="entry name" value="G6P_Isomerase"/>
</dbReference>
<dbReference type="InterPro" id="IPR023096">
    <property type="entry name" value="G6P_Isomerase_C"/>
</dbReference>
<dbReference type="InterPro" id="IPR018189">
    <property type="entry name" value="Phosphoglucose_isomerase_CS"/>
</dbReference>
<dbReference type="InterPro" id="IPR046348">
    <property type="entry name" value="SIS_dom_sf"/>
</dbReference>
<dbReference type="InterPro" id="IPR035476">
    <property type="entry name" value="SIS_PGI_1"/>
</dbReference>
<dbReference type="InterPro" id="IPR035482">
    <property type="entry name" value="SIS_PGI_2"/>
</dbReference>
<dbReference type="NCBIfam" id="NF010695">
    <property type="entry name" value="PRK14095.1"/>
    <property type="match status" value="1"/>
</dbReference>
<dbReference type="PANTHER" id="PTHR11469">
    <property type="entry name" value="GLUCOSE-6-PHOSPHATE ISOMERASE"/>
    <property type="match status" value="1"/>
</dbReference>
<dbReference type="PANTHER" id="PTHR11469:SF1">
    <property type="entry name" value="GLUCOSE-6-PHOSPHATE ISOMERASE"/>
    <property type="match status" value="1"/>
</dbReference>
<dbReference type="Pfam" id="PF00342">
    <property type="entry name" value="PGI"/>
    <property type="match status" value="1"/>
</dbReference>
<dbReference type="PRINTS" id="PR00662">
    <property type="entry name" value="G6PISOMERASE"/>
</dbReference>
<dbReference type="SUPFAM" id="SSF53697">
    <property type="entry name" value="SIS domain"/>
    <property type="match status" value="1"/>
</dbReference>
<dbReference type="PROSITE" id="PS00765">
    <property type="entry name" value="P_GLUCOSE_ISOMERASE_1"/>
    <property type="match status" value="1"/>
</dbReference>
<dbReference type="PROSITE" id="PS00174">
    <property type="entry name" value="P_GLUCOSE_ISOMERASE_2"/>
    <property type="match status" value="1"/>
</dbReference>
<dbReference type="PROSITE" id="PS51463">
    <property type="entry name" value="P_GLUCOSE_ISOMERASE_3"/>
    <property type="match status" value="1"/>
</dbReference>
<reference key="1">
    <citation type="journal article" date="2006" name="BMC Genomics">
        <title>Comparative genome analysis: selection pressure on the Borrelia vls cassettes is essential for infectivity.</title>
        <authorList>
            <person name="Gloeckner G."/>
            <person name="Schulte-Spechtel U."/>
            <person name="Schilhabel M."/>
            <person name="Felder M."/>
            <person name="Suehnel J."/>
            <person name="Wilske B."/>
            <person name="Platzer M."/>
        </authorList>
    </citation>
    <scope>NUCLEOTIDE SEQUENCE [LARGE SCALE GENOMIC DNA]</scope>
    <source>
        <strain>PKo</strain>
    </source>
</reference>
<reference key="2">
    <citation type="journal article" date="2011" name="J. Bacteriol.">
        <title>Whole-genome sequences of two Borrelia afzelii and two Borrelia garinii Lyme disease agent isolates.</title>
        <authorList>
            <person name="Casjens S.R."/>
            <person name="Mongodin E.F."/>
            <person name="Qiu W.G."/>
            <person name="Dunn J.J."/>
            <person name="Luft B.J."/>
            <person name="Fraser-Liggett C.M."/>
            <person name="Schutzer S.E."/>
        </authorList>
    </citation>
    <scope>NUCLEOTIDE SEQUENCE [LARGE SCALE GENOMIC DNA]</scope>
    <source>
        <strain>PKo</strain>
    </source>
</reference>
<name>G6PI_BORAP</name>
<evidence type="ECO:0000255" key="1">
    <source>
        <dbReference type="HAMAP-Rule" id="MF_00473"/>
    </source>
</evidence>
<feature type="chain" id="PRO_1000013943" description="Glucose-6-phosphate isomerase">
    <location>
        <begin position="1"/>
        <end position="530"/>
    </location>
</feature>
<feature type="active site" description="Proton donor" evidence="1">
    <location>
        <position position="356"/>
    </location>
</feature>
<feature type="active site" evidence="1">
    <location>
        <position position="387"/>
    </location>
</feature>
<feature type="active site" evidence="1">
    <location>
        <position position="502"/>
    </location>
</feature>
<organism>
    <name type="scientific">Borreliella afzelii (strain PKo)</name>
    <name type="common">Borrelia afzelii</name>
    <dbReference type="NCBI Taxonomy" id="390236"/>
    <lineage>
        <taxon>Bacteria</taxon>
        <taxon>Pseudomonadati</taxon>
        <taxon>Spirochaetota</taxon>
        <taxon>Spirochaetia</taxon>
        <taxon>Spirochaetales</taxon>
        <taxon>Borreliaceae</taxon>
        <taxon>Borreliella</taxon>
    </lineage>
</organism>